<accession>P0C785</accession>
<evidence type="ECO:0000250" key="1">
    <source>
        <dbReference type="UniProtKB" id="P0C768"/>
    </source>
</evidence>
<feature type="chain" id="PRO_0000399908" description="Replication-associated protein">
    <location>
        <begin position="1"/>
        <end position="46"/>
    </location>
</feature>
<name>RAP1_PLRVW</name>
<sequence>MTPMRITVWRKRLQQMRPQRKLLKQTQQRRLLHQLQQRKLLQQTSL</sequence>
<organismHost>
    <name type="scientific">Solanum tuberosum</name>
    <name type="common">Potato</name>
    <dbReference type="NCBI Taxonomy" id="4113"/>
</organismHost>
<reference key="1">
    <citation type="journal article" date="1989" name="FEBS Lett.">
        <title>Nucleotide sequence and organization of potato leafroll virus genomic RNA.</title>
        <authorList>
            <person name="van der Wilk F."/>
            <person name="Huisman M.J."/>
            <person name="Cornelissen B.J.C."/>
            <person name="Huttinga H."/>
            <person name="Goldbach R.W."/>
        </authorList>
    </citation>
    <scope>NUCLEOTIDE SEQUENCE [GENOMIC RNA]</scope>
</reference>
<organism>
    <name type="scientific">Potato leafroll virus (strain Potato/Netherlands/Wageningen/1989)</name>
    <name type="common">PLrV</name>
    <dbReference type="NCBI Taxonomy" id="12048"/>
    <lineage>
        <taxon>Viruses</taxon>
        <taxon>Riboviria</taxon>
        <taxon>Orthornavirae</taxon>
        <taxon>Pisuviricota</taxon>
        <taxon>Pisoniviricetes</taxon>
        <taxon>Sobelivirales</taxon>
        <taxon>Solemoviridae</taxon>
        <taxon>Polerovirus</taxon>
        <taxon>Potato leafroll virus</taxon>
    </lineage>
</organism>
<comment type="function">
    <text evidence="1">Seems to play a role in virus replication.</text>
</comment>
<proteinExistence type="inferred from homology"/>
<protein>
    <recommendedName>
        <fullName>Replication-associated protein</fullName>
        <shortName>Rap1</shortName>
    </recommendedName>
</protein>
<dbReference type="EMBL" id="Y07496">
    <property type="status" value="NOT_ANNOTATED_CDS"/>
    <property type="molecule type" value="Genomic_RNA"/>
</dbReference>
<dbReference type="SMR" id="P0C785"/>
<dbReference type="Proteomes" id="UP000000474">
    <property type="component" value="Genome"/>
</dbReference>